<sequence length="356" mass="38882">MFSLPSLSSWLPSLPSFEWGSSLFDSLLQGLIGALGVSVLNSLLKVYFFVACVNDPQRQPQKQRLSAQWASLEMLHLAGLTLFLTLIGSRVAALVVLEFSLRAVSTLLSLGKGSGNKERLQLFLVCQFSLGCGLSCGLSFLQEGAPHRSLNLLLSLGLAVLLALGARRLTRHICSLYELHSSQRYCGVCLGLLASQHGMPRLLSRTLTVAFAVSDLAAVALINKDFLSSSEAVRFWTPLTICYTLLVIYMQEEQWQHRFSLQGQVQTVLVRMGGLFLLLMTVGRWLDLLSIFFSLLGELWCLAGIRALIDLCQIQGFPPQRPTVTAAVTAEGESGWTDPCEPRPSTPAPARSAVPS</sequence>
<name>TMM82_MOUSE</name>
<keyword id="KW-0472">Membrane</keyword>
<keyword id="KW-1185">Reference proteome</keyword>
<keyword id="KW-0812">Transmembrane</keyword>
<keyword id="KW-1133">Transmembrane helix</keyword>
<accession>Q8R115</accession>
<accession>A2ADF5</accession>
<dbReference type="EMBL" id="AL670446">
    <property type="status" value="NOT_ANNOTATED_CDS"/>
    <property type="molecule type" value="Genomic_DNA"/>
</dbReference>
<dbReference type="EMBL" id="BC025833">
    <property type="protein sequence ID" value="AAH25833.1"/>
    <property type="molecule type" value="mRNA"/>
</dbReference>
<dbReference type="CCDS" id="CCDS18877.1"/>
<dbReference type="RefSeq" id="NP_666099.2">
    <property type="nucleotide sequence ID" value="NM_145987.2"/>
</dbReference>
<dbReference type="FunCoup" id="Q8R115">
    <property type="interactions" value="3"/>
</dbReference>
<dbReference type="STRING" id="10090.ENSMUSP00000058412"/>
<dbReference type="GlyGen" id="Q8R115">
    <property type="glycosylation" value="1 site"/>
</dbReference>
<dbReference type="iPTMnet" id="Q8R115"/>
<dbReference type="PhosphoSitePlus" id="Q8R115"/>
<dbReference type="PaxDb" id="10090-ENSMUSP00000058412"/>
<dbReference type="ProteomicsDB" id="259135"/>
<dbReference type="Antibodypedia" id="28976">
    <property type="antibodies" value="57 antibodies from 17 providers"/>
</dbReference>
<dbReference type="Ensembl" id="ENSMUST00000053263.9">
    <property type="protein sequence ID" value="ENSMUSP00000058412.9"/>
    <property type="gene ID" value="ENSMUSG00000043085.15"/>
</dbReference>
<dbReference type="GeneID" id="213989"/>
<dbReference type="KEGG" id="mmu:213989"/>
<dbReference type="UCSC" id="uc008vou.1">
    <property type="organism name" value="mouse"/>
</dbReference>
<dbReference type="AGR" id="MGI:2384869"/>
<dbReference type="CTD" id="388595"/>
<dbReference type="MGI" id="MGI:2384869">
    <property type="gene designation" value="Tmem82"/>
</dbReference>
<dbReference type="VEuPathDB" id="HostDB:ENSMUSG00000043085"/>
<dbReference type="eggNOG" id="ENOG502QVH3">
    <property type="taxonomic scope" value="Eukaryota"/>
</dbReference>
<dbReference type="GeneTree" id="ENSGT00500000045021"/>
<dbReference type="HOGENOM" id="CLU_078402_0_0_1"/>
<dbReference type="InParanoid" id="Q8R115"/>
<dbReference type="OMA" id="HVCQLYE"/>
<dbReference type="OrthoDB" id="9943056at2759"/>
<dbReference type="PhylomeDB" id="Q8R115"/>
<dbReference type="TreeFam" id="TF332112"/>
<dbReference type="BioGRID-ORCS" id="213989">
    <property type="hits" value="7 hits in 78 CRISPR screens"/>
</dbReference>
<dbReference type="PRO" id="PR:Q8R115"/>
<dbReference type="Proteomes" id="UP000000589">
    <property type="component" value="Chromosome 4"/>
</dbReference>
<dbReference type="RNAct" id="Q8R115">
    <property type="molecule type" value="protein"/>
</dbReference>
<dbReference type="Bgee" id="ENSMUSG00000043085">
    <property type="expression patterns" value="Expressed in small intestine Peyer's patch and 47 other cell types or tissues"/>
</dbReference>
<dbReference type="ExpressionAtlas" id="Q8R115">
    <property type="expression patterns" value="baseline and differential"/>
</dbReference>
<dbReference type="GO" id="GO:0016020">
    <property type="term" value="C:membrane"/>
    <property type="evidence" value="ECO:0007669"/>
    <property type="project" value="UniProtKB-SubCell"/>
</dbReference>
<dbReference type="InterPro" id="IPR031648">
    <property type="entry name" value="TMEM82"/>
</dbReference>
<dbReference type="PANTHER" id="PTHR35257">
    <property type="entry name" value="TRANSMEMBRANE PROTEIN 82"/>
    <property type="match status" value="1"/>
</dbReference>
<dbReference type="PANTHER" id="PTHR35257:SF1">
    <property type="entry name" value="TRANSMEMBRANE PROTEIN 82"/>
    <property type="match status" value="1"/>
</dbReference>
<dbReference type="Pfam" id="PF15816">
    <property type="entry name" value="TMEM82"/>
    <property type="match status" value="1"/>
</dbReference>
<protein>
    <recommendedName>
        <fullName>Transmembrane protein 82</fullName>
    </recommendedName>
</protein>
<organism>
    <name type="scientific">Mus musculus</name>
    <name type="common">Mouse</name>
    <dbReference type="NCBI Taxonomy" id="10090"/>
    <lineage>
        <taxon>Eukaryota</taxon>
        <taxon>Metazoa</taxon>
        <taxon>Chordata</taxon>
        <taxon>Craniata</taxon>
        <taxon>Vertebrata</taxon>
        <taxon>Euteleostomi</taxon>
        <taxon>Mammalia</taxon>
        <taxon>Eutheria</taxon>
        <taxon>Euarchontoglires</taxon>
        <taxon>Glires</taxon>
        <taxon>Rodentia</taxon>
        <taxon>Myomorpha</taxon>
        <taxon>Muroidea</taxon>
        <taxon>Muridae</taxon>
        <taxon>Murinae</taxon>
        <taxon>Mus</taxon>
        <taxon>Mus</taxon>
    </lineage>
</organism>
<comment type="subcellular location">
    <subcellularLocation>
        <location evidence="3">Membrane</location>
        <topology evidence="3">Multi-pass membrane protein</topology>
    </subcellularLocation>
</comment>
<comment type="similarity">
    <text evidence="3">Belongs to the TMEM82 family.</text>
</comment>
<evidence type="ECO:0000255" key="1"/>
<evidence type="ECO:0000256" key="2">
    <source>
        <dbReference type="SAM" id="MobiDB-lite"/>
    </source>
</evidence>
<evidence type="ECO:0000305" key="3"/>
<feature type="chain" id="PRO_0000309237" description="Transmembrane protein 82">
    <location>
        <begin position="1"/>
        <end position="356"/>
    </location>
</feature>
<feature type="transmembrane region" description="Helical" evidence="1">
    <location>
        <begin position="31"/>
        <end position="51"/>
    </location>
</feature>
<feature type="transmembrane region" description="Helical" evidence="1">
    <location>
        <begin position="77"/>
        <end position="97"/>
    </location>
</feature>
<feature type="transmembrane region" description="Helical" evidence="1">
    <location>
        <begin position="120"/>
        <end position="140"/>
    </location>
</feature>
<feature type="transmembrane region" description="Helical" evidence="1">
    <location>
        <begin position="144"/>
        <end position="164"/>
    </location>
</feature>
<feature type="transmembrane region" description="Helical" evidence="1">
    <location>
        <begin position="202"/>
        <end position="222"/>
    </location>
</feature>
<feature type="transmembrane region" description="Helical" evidence="1">
    <location>
        <begin position="232"/>
        <end position="250"/>
    </location>
</feature>
<feature type="transmembrane region" description="Helical" evidence="1">
    <location>
        <begin position="263"/>
        <end position="283"/>
    </location>
</feature>
<feature type="transmembrane region" description="Helical" evidence="1">
    <location>
        <begin position="285"/>
        <end position="305"/>
    </location>
</feature>
<feature type="region of interest" description="Disordered" evidence="2">
    <location>
        <begin position="331"/>
        <end position="356"/>
    </location>
</feature>
<feature type="sequence conflict" description="In Ref. 2; AAH25833." evidence="3" ref="2">
    <original>W</original>
    <variation>R</variation>
    <location>
        <position position="255"/>
    </location>
</feature>
<reference key="1">
    <citation type="journal article" date="2009" name="PLoS Biol.">
        <title>Lineage-specific biology revealed by a finished genome assembly of the mouse.</title>
        <authorList>
            <person name="Church D.M."/>
            <person name="Goodstadt L."/>
            <person name="Hillier L.W."/>
            <person name="Zody M.C."/>
            <person name="Goldstein S."/>
            <person name="She X."/>
            <person name="Bult C.J."/>
            <person name="Agarwala R."/>
            <person name="Cherry J.L."/>
            <person name="DiCuccio M."/>
            <person name="Hlavina W."/>
            <person name="Kapustin Y."/>
            <person name="Meric P."/>
            <person name="Maglott D."/>
            <person name="Birtle Z."/>
            <person name="Marques A.C."/>
            <person name="Graves T."/>
            <person name="Zhou S."/>
            <person name="Teague B."/>
            <person name="Potamousis K."/>
            <person name="Churas C."/>
            <person name="Place M."/>
            <person name="Herschleb J."/>
            <person name="Runnheim R."/>
            <person name="Forrest D."/>
            <person name="Amos-Landgraf J."/>
            <person name="Schwartz D.C."/>
            <person name="Cheng Z."/>
            <person name="Lindblad-Toh K."/>
            <person name="Eichler E.E."/>
            <person name="Ponting C.P."/>
        </authorList>
    </citation>
    <scope>NUCLEOTIDE SEQUENCE [LARGE SCALE GENOMIC DNA]</scope>
    <source>
        <strain>C57BL/6J</strain>
    </source>
</reference>
<reference key="2">
    <citation type="journal article" date="2004" name="Genome Res.">
        <title>The status, quality, and expansion of the NIH full-length cDNA project: the Mammalian Gene Collection (MGC).</title>
        <authorList>
            <consortium name="The MGC Project Team"/>
        </authorList>
    </citation>
    <scope>NUCLEOTIDE SEQUENCE [LARGE SCALE MRNA]</scope>
    <source>
        <strain>FVB/N</strain>
        <tissue>Liver</tissue>
    </source>
</reference>
<reference key="3">
    <citation type="journal article" date="2010" name="Cell">
        <title>A tissue-specific atlas of mouse protein phosphorylation and expression.</title>
        <authorList>
            <person name="Huttlin E.L."/>
            <person name="Jedrychowski M.P."/>
            <person name="Elias J.E."/>
            <person name="Goswami T."/>
            <person name="Rad R."/>
            <person name="Beausoleil S.A."/>
            <person name="Villen J."/>
            <person name="Haas W."/>
            <person name="Sowa M.E."/>
            <person name="Gygi S.P."/>
        </authorList>
    </citation>
    <scope>IDENTIFICATION BY MASS SPECTROMETRY [LARGE SCALE ANALYSIS]</scope>
    <source>
        <tissue>Kidney</tissue>
        <tissue>Liver</tissue>
    </source>
</reference>
<gene>
    <name type="primary">Tmem82</name>
</gene>
<proteinExistence type="evidence at protein level"/>